<dbReference type="EMBL" id="L47838">
    <property type="protein sequence ID" value="AAB38462.1"/>
    <property type="molecule type" value="Genomic_DNA"/>
</dbReference>
<dbReference type="EMBL" id="AL009126">
    <property type="protein sequence ID" value="CAB14145.1"/>
    <property type="molecule type" value="Genomic_DNA"/>
</dbReference>
<dbReference type="PIR" id="A69940">
    <property type="entry name" value="A69940"/>
</dbReference>
<dbReference type="RefSeq" id="NP_390110.1">
    <property type="nucleotide sequence ID" value="NC_000964.3"/>
</dbReference>
<dbReference type="RefSeq" id="WP_004398488.1">
    <property type="nucleotide sequence ID" value="NZ_OZ025638.1"/>
</dbReference>
<dbReference type="SMR" id="P50832"/>
<dbReference type="FunCoup" id="P50832">
    <property type="interactions" value="43"/>
</dbReference>
<dbReference type="IntAct" id="P50832">
    <property type="interactions" value="1"/>
</dbReference>
<dbReference type="STRING" id="224308.BSU22280"/>
<dbReference type="PaxDb" id="224308-BSU22280"/>
<dbReference type="EnsemblBacteria" id="CAB14145">
    <property type="protein sequence ID" value="CAB14145"/>
    <property type="gene ID" value="BSU_22280"/>
</dbReference>
<dbReference type="GeneID" id="939042"/>
<dbReference type="KEGG" id="bsu:BSU22280"/>
<dbReference type="PATRIC" id="fig|224308.179.peg.2432"/>
<dbReference type="InParanoid" id="P50832"/>
<dbReference type="OrthoDB" id="2900823at2"/>
<dbReference type="BioCyc" id="BSUB:BSU22280-MONOMER"/>
<dbReference type="Proteomes" id="UP000001570">
    <property type="component" value="Chromosome"/>
</dbReference>
<dbReference type="InterPro" id="IPR020252">
    <property type="entry name" value="DUF5446"/>
</dbReference>
<dbReference type="Pfam" id="PF17522">
    <property type="entry name" value="DUF5446"/>
    <property type="match status" value="1"/>
</dbReference>
<reference key="1">
    <citation type="journal article" date="1996" name="Microbiology">
        <title>Sequence analysis of the Bacillus subtilis chromosome region between the serA and kdg loci cloned in a yeast artificial chromosome.</title>
        <authorList>
            <person name="Sorokin A.V."/>
            <person name="Azevedo V."/>
            <person name="Zumstein E."/>
            <person name="Galleron N."/>
            <person name="Ehrlich S.D."/>
            <person name="Serror P."/>
        </authorList>
    </citation>
    <scope>NUCLEOTIDE SEQUENCE [GENOMIC DNA]</scope>
    <source>
        <strain>168 / Marburg / ATCC 6051 / DSM 10 / JCM 1465 / NBRC 13719 / NCIMB 3610 / NRRL NRS-744 / VKM B-501</strain>
    </source>
</reference>
<reference key="2">
    <citation type="journal article" date="1997" name="Nature">
        <title>The complete genome sequence of the Gram-positive bacterium Bacillus subtilis.</title>
        <authorList>
            <person name="Kunst F."/>
            <person name="Ogasawara N."/>
            <person name="Moszer I."/>
            <person name="Albertini A.M."/>
            <person name="Alloni G."/>
            <person name="Azevedo V."/>
            <person name="Bertero M.G."/>
            <person name="Bessieres P."/>
            <person name="Bolotin A."/>
            <person name="Borchert S."/>
            <person name="Borriss R."/>
            <person name="Boursier L."/>
            <person name="Brans A."/>
            <person name="Braun M."/>
            <person name="Brignell S.C."/>
            <person name="Bron S."/>
            <person name="Brouillet S."/>
            <person name="Bruschi C.V."/>
            <person name="Caldwell B."/>
            <person name="Capuano V."/>
            <person name="Carter N.M."/>
            <person name="Choi S.-K."/>
            <person name="Codani J.-J."/>
            <person name="Connerton I.F."/>
            <person name="Cummings N.J."/>
            <person name="Daniel R.A."/>
            <person name="Denizot F."/>
            <person name="Devine K.M."/>
            <person name="Duesterhoeft A."/>
            <person name="Ehrlich S.D."/>
            <person name="Emmerson P.T."/>
            <person name="Entian K.-D."/>
            <person name="Errington J."/>
            <person name="Fabret C."/>
            <person name="Ferrari E."/>
            <person name="Foulger D."/>
            <person name="Fritz C."/>
            <person name="Fujita M."/>
            <person name="Fujita Y."/>
            <person name="Fuma S."/>
            <person name="Galizzi A."/>
            <person name="Galleron N."/>
            <person name="Ghim S.-Y."/>
            <person name="Glaser P."/>
            <person name="Goffeau A."/>
            <person name="Golightly E.J."/>
            <person name="Grandi G."/>
            <person name="Guiseppi G."/>
            <person name="Guy B.J."/>
            <person name="Haga K."/>
            <person name="Haiech J."/>
            <person name="Harwood C.R."/>
            <person name="Henaut A."/>
            <person name="Hilbert H."/>
            <person name="Holsappel S."/>
            <person name="Hosono S."/>
            <person name="Hullo M.-F."/>
            <person name="Itaya M."/>
            <person name="Jones L.-M."/>
            <person name="Joris B."/>
            <person name="Karamata D."/>
            <person name="Kasahara Y."/>
            <person name="Klaerr-Blanchard M."/>
            <person name="Klein C."/>
            <person name="Kobayashi Y."/>
            <person name="Koetter P."/>
            <person name="Koningstein G."/>
            <person name="Krogh S."/>
            <person name="Kumano M."/>
            <person name="Kurita K."/>
            <person name="Lapidus A."/>
            <person name="Lardinois S."/>
            <person name="Lauber J."/>
            <person name="Lazarevic V."/>
            <person name="Lee S.-M."/>
            <person name="Levine A."/>
            <person name="Liu H."/>
            <person name="Masuda S."/>
            <person name="Mauel C."/>
            <person name="Medigue C."/>
            <person name="Medina N."/>
            <person name="Mellado R.P."/>
            <person name="Mizuno M."/>
            <person name="Moestl D."/>
            <person name="Nakai S."/>
            <person name="Noback M."/>
            <person name="Noone D."/>
            <person name="O'Reilly M."/>
            <person name="Ogawa K."/>
            <person name="Ogiwara A."/>
            <person name="Oudega B."/>
            <person name="Park S.-H."/>
            <person name="Parro V."/>
            <person name="Pohl T.M."/>
            <person name="Portetelle D."/>
            <person name="Porwollik S."/>
            <person name="Prescott A.M."/>
            <person name="Presecan E."/>
            <person name="Pujic P."/>
            <person name="Purnelle B."/>
            <person name="Rapoport G."/>
            <person name="Rey M."/>
            <person name="Reynolds S."/>
            <person name="Rieger M."/>
            <person name="Rivolta C."/>
            <person name="Rocha E."/>
            <person name="Roche B."/>
            <person name="Rose M."/>
            <person name="Sadaie Y."/>
            <person name="Sato T."/>
            <person name="Scanlan E."/>
            <person name="Schleich S."/>
            <person name="Schroeter R."/>
            <person name="Scoffone F."/>
            <person name="Sekiguchi J."/>
            <person name="Sekowska A."/>
            <person name="Seror S.J."/>
            <person name="Serror P."/>
            <person name="Shin B.-S."/>
            <person name="Soldo B."/>
            <person name="Sorokin A."/>
            <person name="Tacconi E."/>
            <person name="Takagi T."/>
            <person name="Takahashi H."/>
            <person name="Takemaru K."/>
            <person name="Takeuchi M."/>
            <person name="Tamakoshi A."/>
            <person name="Tanaka T."/>
            <person name="Terpstra P."/>
            <person name="Tognoni A."/>
            <person name="Tosato V."/>
            <person name="Uchiyama S."/>
            <person name="Vandenbol M."/>
            <person name="Vannier F."/>
            <person name="Vassarotti A."/>
            <person name="Viari A."/>
            <person name="Wambutt R."/>
            <person name="Wedler E."/>
            <person name="Wedler H."/>
            <person name="Weitzenegger T."/>
            <person name="Winters P."/>
            <person name="Wipat A."/>
            <person name="Yamamoto H."/>
            <person name="Yamane K."/>
            <person name="Yasumoto K."/>
            <person name="Yata K."/>
            <person name="Yoshida K."/>
            <person name="Yoshikawa H.-F."/>
            <person name="Zumstein E."/>
            <person name="Yoshikawa H."/>
            <person name="Danchin A."/>
        </authorList>
    </citation>
    <scope>NUCLEOTIDE SEQUENCE [LARGE SCALE GENOMIC DNA]</scope>
    <source>
        <strain>168</strain>
    </source>
</reference>
<protein>
    <recommendedName>
        <fullName>Uncharacterized protein YppD</fullName>
    </recommendedName>
</protein>
<sequence>MSGYVCKTDILRMLSDIEDELTRAEQSLNHSVNALEAEMRETENDRLSVLEEEIIDLHICINELYQSPEHRYAFEKVYRIG</sequence>
<gene>
    <name type="primary">yppD</name>
    <name type="ordered locus">BSU22280</name>
</gene>
<feature type="chain" id="PRO_0000049718" description="Uncharacterized protein YppD">
    <location>
        <begin position="1"/>
        <end position="81"/>
    </location>
</feature>
<name>YPPD_BACSU</name>
<proteinExistence type="predicted"/>
<keyword id="KW-1185">Reference proteome</keyword>
<accession>P50832</accession>
<organism>
    <name type="scientific">Bacillus subtilis (strain 168)</name>
    <dbReference type="NCBI Taxonomy" id="224308"/>
    <lineage>
        <taxon>Bacteria</taxon>
        <taxon>Bacillati</taxon>
        <taxon>Bacillota</taxon>
        <taxon>Bacilli</taxon>
        <taxon>Bacillales</taxon>
        <taxon>Bacillaceae</taxon>
        <taxon>Bacillus</taxon>
    </lineage>
</organism>